<proteinExistence type="inferred from homology"/>
<sequence length="141" mass="15616">MPDAVGRELPRDGTVLAFDYGEKKIGVALGNFITREARALTILPNITVEGRFEAVAALIQEWNPVQLIVGMPVNPEGGEQPSMKLARRFGNQLNGRFGLPVEWVDERYTSRAASMAGARRGELDAEAARIILQQYFDQFPL</sequence>
<dbReference type="EC" id="3.1.-.-" evidence="1"/>
<dbReference type="EMBL" id="AM260479">
    <property type="protein sequence ID" value="CAJ93991.1"/>
    <property type="molecule type" value="Genomic_DNA"/>
</dbReference>
<dbReference type="SMR" id="Q0K7N0"/>
<dbReference type="STRING" id="381666.H16_A2915"/>
<dbReference type="KEGG" id="reh:H16_A2915"/>
<dbReference type="eggNOG" id="COG0816">
    <property type="taxonomic scope" value="Bacteria"/>
</dbReference>
<dbReference type="HOGENOM" id="CLU_098240_3_2_4"/>
<dbReference type="OrthoDB" id="9796140at2"/>
<dbReference type="Proteomes" id="UP000008210">
    <property type="component" value="Chromosome 1"/>
</dbReference>
<dbReference type="GO" id="GO:0005829">
    <property type="term" value="C:cytosol"/>
    <property type="evidence" value="ECO:0007669"/>
    <property type="project" value="TreeGrafter"/>
</dbReference>
<dbReference type="GO" id="GO:0004518">
    <property type="term" value="F:nuclease activity"/>
    <property type="evidence" value="ECO:0007669"/>
    <property type="project" value="UniProtKB-KW"/>
</dbReference>
<dbReference type="GO" id="GO:0000967">
    <property type="term" value="P:rRNA 5'-end processing"/>
    <property type="evidence" value="ECO:0007669"/>
    <property type="project" value="UniProtKB-UniRule"/>
</dbReference>
<dbReference type="CDD" id="cd16964">
    <property type="entry name" value="YqgF"/>
    <property type="match status" value="1"/>
</dbReference>
<dbReference type="Gene3D" id="3.30.420.140">
    <property type="entry name" value="YqgF/RNase H-like domain"/>
    <property type="match status" value="1"/>
</dbReference>
<dbReference type="HAMAP" id="MF_00651">
    <property type="entry name" value="Nuclease_YqgF"/>
    <property type="match status" value="1"/>
</dbReference>
<dbReference type="InterPro" id="IPR012337">
    <property type="entry name" value="RNaseH-like_sf"/>
</dbReference>
<dbReference type="InterPro" id="IPR005227">
    <property type="entry name" value="YqgF"/>
</dbReference>
<dbReference type="InterPro" id="IPR006641">
    <property type="entry name" value="YqgF/RNaseH-like_dom"/>
</dbReference>
<dbReference type="InterPro" id="IPR037027">
    <property type="entry name" value="YqgF/RNaseH-like_dom_sf"/>
</dbReference>
<dbReference type="NCBIfam" id="TIGR00250">
    <property type="entry name" value="RNAse_H_YqgF"/>
    <property type="match status" value="1"/>
</dbReference>
<dbReference type="PANTHER" id="PTHR33317">
    <property type="entry name" value="POLYNUCLEOTIDYL TRANSFERASE, RIBONUCLEASE H-LIKE SUPERFAMILY PROTEIN"/>
    <property type="match status" value="1"/>
</dbReference>
<dbReference type="PANTHER" id="PTHR33317:SF4">
    <property type="entry name" value="POLYNUCLEOTIDYL TRANSFERASE, RIBONUCLEASE H-LIKE SUPERFAMILY PROTEIN"/>
    <property type="match status" value="1"/>
</dbReference>
<dbReference type="Pfam" id="PF03652">
    <property type="entry name" value="RuvX"/>
    <property type="match status" value="1"/>
</dbReference>
<dbReference type="SMART" id="SM00732">
    <property type="entry name" value="YqgFc"/>
    <property type="match status" value="1"/>
</dbReference>
<dbReference type="SUPFAM" id="SSF53098">
    <property type="entry name" value="Ribonuclease H-like"/>
    <property type="match status" value="1"/>
</dbReference>
<feature type="chain" id="PRO_1000147487" description="Putative pre-16S rRNA nuclease">
    <location>
        <begin position="1"/>
        <end position="141"/>
    </location>
</feature>
<organism>
    <name type="scientific">Cupriavidus necator (strain ATCC 17699 / DSM 428 / KCTC 22496 / NCIMB 10442 / H16 / Stanier 337)</name>
    <name type="common">Ralstonia eutropha</name>
    <dbReference type="NCBI Taxonomy" id="381666"/>
    <lineage>
        <taxon>Bacteria</taxon>
        <taxon>Pseudomonadati</taxon>
        <taxon>Pseudomonadota</taxon>
        <taxon>Betaproteobacteria</taxon>
        <taxon>Burkholderiales</taxon>
        <taxon>Burkholderiaceae</taxon>
        <taxon>Cupriavidus</taxon>
    </lineage>
</organism>
<evidence type="ECO:0000255" key="1">
    <source>
        <dbReference type="HAMAP-Rule" id="MF_00651"/>
    </source>
</evidence>
<accession>Q0K7N0</accession>
<protein>
    <recommendedName>
        <fullName evidence="1">Putative pre-16S rRNA nuclease</fullName>
        <ecNumber evidence="1">3.1.-.-</ecNumber>
    </recommendedName>
</protein>
<name>YQGF_CUPNH</name>
<gene>
    <name type="ordered locus">H16_A2915</name>
</gene>
<reference key="1">
    <citation type="journal article" date="2006" name="Nat. Biotechnol.">
        <title>Genome sequence of the bioplastic-producing 'Knallgas' bacterium Ralstonia eutropha H16.</title>
        <authorList>
            <person name="Pohlmann A."/>
            <person name="Fricke W.F."/>
            <person name="Reinecke F."/>
            <person name="Kusian B."/>
            <person name="Liesegang H."/>
            <person name="Cramm R."/>
            <person name="Eitinger T."/>
            <person name="Ewering C."/>
            <person name="Poetter M."/>
            <person name="Schwartz E."/>
            <person name="Strittmatter A."/>
            <person name="Voss I."/>
            <person name="Gottschalk G."/>
            <person name="Steinbuechel A."/>
            <person name="Friedrich B."/>
            <person name="Bowien B."/>
        </authorList>
    </citation>
    <scope>NUCLEOTIDE SEQUENCE [LARGE SCALE GENOMIC DNA]</scope>
    <source>
        <strain>ATCC 17699 / DSM 428 / KCTC 22496 / NCIMB 10442 / H16 / Stanier 337</strain>
    </source>
</reference>
<comment type="function">
    <text evidence="1">Could be a nuclease involved in processing of the 5'-end of pre-16S rRNA.</text>
</comment>
<comment type="subcellular location">
    <subcellularLocation>
        <location evidence="1">Cytoplasm</location>
    </subcellularLocation>
</comment>
<comment type="similarity">
    <text evidence="1">Belongs to the YqgF nuclease family.</text>
</comment>
<keyword id="KW-0963">Cytoplasm</keyword>
<keyword id="KW-0378">Hydrolase</keyword>
<keyword id="KW-0540">Nuclease</keyword>
<keyword id="KW-1185">Reference proteome</keyword>
<keyword id="KW-0690">Ribosome biogenesis</keyword>